<dbReference type="EC" id="2.7.11.1"/>
<dbReference type="EMBL" id="AB016884">
    <property type="protein sequence ID" value="BAB11236.1"/>
    <property type="molecule type" value="Genomic_DNA"/>
</dbReference>
<dbReference type="EMBL" id="AB025641">
    <property type="protein sequence ID" value="BAB11236.1"/>
    <property type="status" value="JOINED"/>
    <property type="molecule type" value="Genomic_DNA"/>
</dbReference>
<dbReference type="EMBL" id="CP002688">
    <property type="protein sequence ID" value="AED93310.1"/>
    <property type="molecule type" value="Genomic_DNA"/>
</dbReference>
<dbReference type="EMBL" id="AY128408">
    <property type="protein sequence ID" value="AAM91611.1"/>
    <property type="status" value="ALT_INIT"/>
    <property type="molecule type" value="mRNA"/>
</dbReference>
<dbReference type="EMBL" id="AF130252">
    <property type="protein sequence ID" value="AAD28759.1"/>
    <property type="status" value="ALT_FRAME"/>
    <property type="molecule type" value="mRNA"/>
</dbReference>
<dbReference type="EMBL" id="AK221965">
    <property type="protein sequence ID" value="BAD94474.1"/>
    <property type="status" value="ALT_INIT"/>
    <property type="molecule type" value="mRNA"/>
</dbReference>
<dbReference type="RefSeq" id="NP_197831.3">
    <property type="nucleotide sequence ID" value="NM_122351.5"/>
</dbReference>
<dbReference type="SMR" id="Q9FIM9"/>
<dbReference type="FunCoup" id="Q9FIM9">
    <property type="interactions" value="649"/>
</dbReference>
<dbReference type="STRING" id="3702.Q9FIM9"/>
<dbReference type="iPTMnet" id="Q9FIM9"/>
<dbReference type="PaxDb" id="3702-AT5G24430.1"/>
<dbReference type="ProteomicsDB" id="239095"/>
<dbReference type="EnsemblPlants" id="AT5G24430.1">
    <property type="protein sequence ID" value="AT5G24430.1"/>
    <property type="gene ID" value="AT5G24430"/>
</dbReference>
<dbReference type="GeneID" id="832514"/>
<dbReference type="Gramene" id="AT5G24430.1">
    <property type="protein sequence ID" value="AT5G24430.1"/>
    <property type="gene ID" value="AT5G24430"/>
</dbReference>
<dbReference type="KEGG" id="ath:AT5G24430"/>
<dbReference type="Araport" id="AT5G24430"/>
<dbReference type="TAIR" id="AT5G24430"/>
<dbReference type="eggNOG" id="KOG0032">
    <property type="taxonomic scope" value="Eukaryota"/>
</dbReference>
<dbReference type="HOGENOM" id="CLU_000288_37_2_1"/>
<dbReference type="InParanoid" id="Q9FIM9"/>
<dbReference type="OMA" id="NHRHASI"/>
<dbReference type="PhylomeDB" id="Q9FIM9"/>
<dbReference type="CD-CODE" id="4299E36E">
    <property type="entry name" value="Nucleolus"/>
</dbReference>
<dbReference type="PRO" id="PR:Q9FIM9"/>
<dbReference type="Proteomes" id="UP000006548">
    <property type="component" value="Chromosome 5"/>
</dbReference>
<dbReference type="ExpressionAtlas" id="Q9FIM9">
    <property type="expression patterns" value="baseline and differential"/>
</dbReference>
<dbReference type="GO" id="GO:0005886">
    <property type="term" value="C:plasma membrane"/>
    <property type="evidence" value="ECO:0007005"/>
    <property type="project" value="TAIR"/>
</dbReference>
<dbReference type="GO" id="GO:0009506">
    <property type="term" value="C:plasmodesma"/>
    <property type="evidence" value="ECO:0007005"/>
    <property type="project" value="TAIR"/>
</dbReference>
<dbReference type="GO" id="GO:0005524">
    <property type="term" value="F:ATP binding"/>
    <property type="evidence" value="ECO:0007669"/>
    <property type="project" value="UniProtKB-KW"/>
</dbReference>
<dbReference type="GO" id="GO:0046872">
    <property type="term" value="F:metal ion binding"/>
    <property type="evidence" value="ECO:0007669"/>
    <property type="project" value="UniProtKB-KW"/>
</dbReference>
<dbReference type="GO" id="GO:0106310">
    <property type="term" value="F:protein serine kinase activity"/>
    <property type="evidence" value="ECO:0007669"/>
    <property type="project" value="RHEA"/>
</dbReference>
<dbReference type="GO" id="GO:0004674">
    <property type="term" value="F:protein serine/threonine kinase activity"/>
    <property type="evidence" value="ECO:0007005"/>
    <property type="project" value="TAIR"/>
</dbReference>
<dbReference type="GO" id="GO:0046777">
    <property type="term" value="P:protein autophosphorylation"/>
    <property type="evidence" value="ECO:0007005"/>
    <property type="project" value="TAIR"/>
</dbReference>
<dbReference type="CDD" id="cd05117">
    <property type="entry name" value="STKc_CAMK"/>
    <property type="match status" value="1"/>
</dbReference>
<dbReference type="FunFam" id="1.10.510.10:FF:001864">
    <property type="entry name" value="Calcium-dependent protein kinase SK5"/>
    <property type="match status" value="1"/>
</dbReference>
<dbReference type="FunFam" id="1.10.238.10:FF:000085">
    <property type="entry name" value="CDPK-related kinase 1"/>
    <property type="match status" value="1"/>
</dbReference>
<dbReference type="FunFam" id="3.30.200.20:FF:000101">
    <property type="entry name" value="CDPK-related kinase 1"/>
    <property type="match status" value="1"/>
</dbReference>
<dbReference type="FunFam" id="1.10.510.10:FF:001294">
    <property type="entry name" value="CDPK-related kinase 3"/>
    <property type="match status" value="1"/>
</dbReference>
<dbReference type="Gene3D" id="1.10.238.10">
    <property type="entry name" value="EF-hand"/>
    <property type="match status" value="2"/>
</dbReference>
<dbReference type="Gene3D" id="3.30.200.20">
    <property type="entry name" value="Phosphorylase Kinase, domain 1"/>
    <property type="match status" value="1"/>
</dbReference>
<dbReference type="Gene3D" id="1.10.510.10">
    <property type="entry name" value="Transferase(Phosphotransferase) domain 1"/>
    <property type="match status" value="1"/>
</dbReference>
<dbReference type="InterPro" id="IPR050205">
    <property type="entry name" value="CDPK_Ser/Thr_kinases"/>
</dbReference>
<dbReference type="InterPro" id="IPR011992">
    <property type="entry name" value="EF-hand-dom_pair"/>
</dbReference>
<dbReference type="InterPro" id="IPR011009">
    <property type="entry name" value="Kinase-like_dom_sf"/>
</dbReference>
<dbReference type="InterPro" id="IPR000719">
    <property type="entry name" value="Prot_kinase_dom"/>
</dbReference>
<dbReference type="InterPro" id="IPR017441">
    <property type="entry name" value="Protein_kinase_ATP_BS"/>
</dbReference>
<dbReference type="InterPro" id="IPR008271">
    <property type="entry name" value="Ser/Thr_kinase_AS"/>
</dbReference>
<dbReference type="PANTHER" id="PTHR24349">
    <property type="entry name" value="SERINE/THREONINE-PROTEIN KINASE"/>
    <property type="match status" value="1"/>
</dbReference>
<dbReference type="Pfam" id="PF00069">
    <property type="entry name" value="Pkinase"/>
    <property type="match status" value="1"/>
</dbReference>
<dbReference type="SMART" id="SM00220">
    <property type="entry name" value="S_TKc"/>
    <property type="match status" value="1"/>
</dbReference>
<dbReference type="SUPFAM" id="SSF47473">
    <property type="entry name" value="EF-hand"/>
    <property type="match status" value="1"/>
</dbReference>
<dbReference type="SUPFAM" id="SSF56112">
    <property type="entry name" value="Protein kinase-like (PK-like)"/>
    <property type="match status" value="1"/>
</dbReference>
<dbReference type="PROSITE" id="PS00107">
    <property type="entry name" value="PROTEIN_KINASE_ATP"/>
    <property type="match status" value="1"/>
</dbReference>
<dbReference type="PROSITE" id="PS50011">
    <property type="entry name" value="PROTEIN_KINASE_DOM"/>
    <property type="match status" value="1"/>
</dbReference>
<dbReference type="PROSITE" id="PS00108">
    <property type="entry name" value="PROTEIN_KINASE_ST"/>
    <property type="match status" value="1"/>
</dbReference>
<name>CAMK4_ARATH</name>
<reference key="1">
    <citation type="journal article" date="1998" name="DNA Res.">
        <title>Structural analysis of Arabidopsis thaliana chromosome 5. VIII. Sequence features of the regions of 1,081,958 bp covered by seventeen physically assigned P1 and TAC clones.</title>
        <authorList>
            <person name="Asamizu E."/>
            <person name="Sato S."/>
            <person name="Kaneko T."/>
            <person name="Nakamura Y."/>
            <person name="Kotani H."/>
            <person name="Miyajima N."/>
            <person name="Tabata S."/>
        </authorList>
    </citation>
    <scope>NUCLEOTIDE SEQUENCE [LARGE SCALE GENOMIC DNA]</scope>
    <source>
        <strain>cv. Columbia</strain>
    </source>
</reference>
<reference key="2">
    <citation type="submission" date="1999-04" db="EMBL/GenBank/DDBJ databases">
        <title>Structural analysis of Arabidopsis thaliana chromosome 5. XI.</title>
        <authorList>
            <person name="Kaneko T."/>
            <person name="Katoh T."/>
            <person name="Asamizu E."/>
            <person name="Sato S."/>
            <person name="Nakamura Y."/>
            <person name="Kotani H."/>
            <person name="Tabata S."/>
        </authorList>
    </citation>
    <scope>NUCLEOTIDE SEQUENCE [LARGE SCALE GENOMIC DNA]</scope>
    <source>
        <strain>cv. Columbia</strain>
    </source>
</reference>
<reference key="3">
    <citation type="journal article" date="2017" name="Plant J.">
        <title>Araport11: a complete reannotation of the Arabidopsis thaliana reference genome.</title>
        <authorList>
            <person name="Cheng C.Y."/>
            <person name="Krishnakumar V."/>
            <person name="Chan A.P."/>
            <person name="Thibaud-Nissen F."/>
            <person name="Schobel S."/>
            <person name="Town C.D."/>
        </authorList>
    </citation>
    <scope>GENOME REANNOTATION</scope>
    <source>
        <strain>cv. Columbia</strain>
    </source>
</reference>
<reference key="4">
    <citation type="journal article" date="2003" name="Science">
        <title>Empirical analysis of transcriptional activity in the Arabidopsis genome.</title>
        <authorList>
            <person name="Yamada K."/>
            <person name="Lim J."/>
            <person name="Dale J.M."/>
            <person name="Chen H."/>
            <person name="Shinn P."/>
            <person name="Palm C.J."/>
            <person name="Southwick A.M."/>
            <person name="Wu H.C."/>
            <person name="Kim C.J."/>
            <person name="Nguyen M."/>
            <person name="Pham P.K."/>
            <person name="Cheuk R.F."/>
            <person name="Karlin-Newmann G."/>
            <person name="Liu S.X."/>
            <person name="Lam B."/>
            <person name="Sakano H."/>
            <person name="Wu T."/>
            <person name="Yu G."/>
            <person name="Miranda M."/>
            <person name="Quach H.L."/>
            <person name="Tripp M."/>
            <person name="Chang C.H."/>
            <person name="Lee J.M."/>
            <person name="Toriumi M.J."/>
            <person name="Chan M.M."/>
            <person name="Tang C.C."/>
            <person name="Onodera C.S."/>
            <person name="Deng J.M."/>
            <person name="Akiyama K."/>
            <person name="Ansari Y."/>
            <person name="Arakawa T."/>
            <person name="Banh J."/>
            <person name="Banno F."/>
            <person name="Bowser L."/>
            <person name="Brooks S.Y."/>
            <person name="Carninci P."/>
            <person name="Chao Q."/>
            <person name="Choy N."/>
            <person name="Enju A."/>
            <person name="Goldsmith A.D."/>
            <person name="Gurjal M."/>
            <person name="Hansen N.F."/>
            <person name="Hayashizaki Y."/>
            <person name="Johnson-Hopson C."/>
            <person name="Hsuan V.W."/>
            <person name="Iida K."/>
            <person name="Karnes M."/>
            <person name="Khan S."/>
            <person name="Koesema E."/>
            <person name="Ishida J."/>
            <person name="Jiang P.X."/>
            <person name="Jones T."/>
            <person name="Kawai J."/>
            <person name="Kamiya A."/>
            <person name="Meyers C."/>
            <person name="Nakajima M."/>
            <person name="Narusaka M."/>
            <person name="Seki M."/>
            <person name="Sakurai T."/>
            <person name="Satou M."/>
            <person name="Tamse R."/>
            <person name="Vaysberg M."/>
            <person name="Wallender E.K."/>
            <person name="Wong C."/>
            <person name="Yamamura Y."/>
            <person name="Yuan S."/>
            <person name="Shinozaki K."/>
            <person name="Davis R.W."/>
            <person name="Theologis A."/>
            <person name="Ecker J.R."/>
        </authorList>
    </citation>
    <scope>NUCLEOTIDE SEQUENCE [LARGE SCALE MRNA] OF 107-594</scope>
    <source>
        <strain>cv. Columbia</strain>
    </source>
</reference>
<reference key="5">
    <citation type="journal article" date="2005" name="Plant Sci.">
        <title>Biochemical and expression analysis of an Arabidopsis calcium-dependent protein kinase-related kinase.</title>
        <authorList>
            <person name="Du W."/>
            <person name="Wang Y."/>
            <person name="Liang S."/>
            <person name="Lu Y.-T."/>
        </authorList>
        <dbReference type="AGRICOLA" id="IND43694487"/>
    </citation>
    <scope>NUCLEOTIDE SEQUENCE [MRNA] OF 138-594</scope>
    <scope>GENE FAMILY</scope>
    <source>
        <strain>cv. Columbia</strain>
    </source>
</reference>
<reference key="6">
    <citation type="submission" date="2005-03" db="EMBL/GenBank/DDBJ databases">
        <title>Large-scale analysis of RIKEN Arabidopsis full-length (RAFL) cDNAs.</title>
        <authorList>
            <person name="Totoki Y."/>
            <person name="Seki M."/>
            <person name="Ishida J."/>
            <person name="Nakajima M."/>
            <person name="Enju A."/>
            <person name="Kamiya A."/>
            <person name="Narusaka M."/>
            <person name="Shin-i T."/>
            <person name="Nakagawa M."/>
            <person name="Sakamoto N."/>
            <person name="Oishi K."/>
            <person name="Kohara Y."/>
            <person name="Kobayashi M."/>
            <person name="Toyoda A."/>
            <person name="Sakaki Y."/>
            <person name="Sakurai T."/>
            <person name="Iida K."/>
            <person name="Akiyama K."/>
            <person name="Satou M."/>
            <person name="Toyoda T."/>
            <person name="Konagaya A."/>
            <person name="Carninci P."/>
            <person name="Kawai J."/>
            <person name="Hayashizaki Y."/>
            <person name="Shinozaki K."/>
        </authorList>
    </citation>
    <scope>NUCLEOTIDE SEQUENCE [LARGE SCALE MRNA] OF 465-594</scope>
    <source>
        <strain>cv. Columbia</strain>
    </source>
</reference>
<reference key="7">
    <citation type="journal article" date="2003" name="Gravit. Space Biol. Bull.">
        <title>Calcium-regulated protein kinases of plants.</title>
        <authorList>
            <person name="Harmon A.C."/>
        </authorList>
    </citation>
    <scope>REVIEW</scope>
    <scope>GENE FAMILY</scope>
</reference>
<reference key="8">
    <citation type="journal article" date="2003" name="Plant Physiol.">
        <title>The Arabidopsis CDPK-SnRK superfamily of protein kinases.</title>
        <authorList>
            <person name="Hrabak E.M."/>
            <person name="Chan C.W.M."/>
            <person name="Gribskov M."/>
            <person name="Harper J.F."/>
            <person name="Choi J.H."/>
            <person name="Halford N."/>
            <person name="Kudla J."/>
            <person name="Luan S."/>
            <person name="Nimmo H.G."/>
            <person name="Sussman M.R."/>
            <person name="Thomas M."/>
            <person name="Walker-Simmons K."/>
            <person name="Zhu J.-K."/>
            <person name="Harmon A.C."/>
        </authorList>
    </citation>
    <scope>GENE FAMILY</scope>
    <scope>NOMENCLATURE</scope>
    <source>
        <strain>cv. Columbia</strain>
    </source>
</reference>
<reference key="9">
    <citation type="journal article" date="2007" name="Mol. Cell. Proteomics">
        <title>A high content in lipid-modified peripheral proteins and integral receptor kinases features in the arabidopsis plasma membrane proteome.</title>
        <authorList>
            <person name="Marmagne A."/>
            <person name="Ferro M."/>
            <person name="Meinnel T."/>
            <person name="Bruley C."/>
            <person name="Kuhn L."/>
            <person name="Garin J."/>
            <person name="Barbier-Brygoo H."/>
            <person name="Ephritikhine G."/>
        </authorList>
    </citation>
    <scope>IDENTIFICATION BY MASS SPECTROMETRY</scope>
    <scope>SUBCELLULAR LOCATION [LARGE SCALE ANALYSIS]</scope>
</reference>
<protein>
    <recommendedName>
        <fullName>CDPK-related kinase 4</fullName>
        <shortName>AtCRK4</shortName>
        <ecNumber>2.7.11.1</ecNumber>
    </recommendedName>
    <alternativeName>
        <fullName>Calcium/calmodulin-dependent protein kinase CRK4</fullName>
    </alternativeName>
</protein>
<feature type="initiator methionine" description="Removed" evidence="3">
    <location>
        <position position="1"/>
    </location>
</feature>
<feature type="chain" id="PRO_0000420531" description="CDPK-related kinase 4">
    <location>
        <begin position="2"/>
        <end position="594"/>
    </location>
</feature>
<feature type="domain" description="Protein kinase" evidence="4">
    <location>
        <begin position="143"/>
        <end position="405"/>
    </location>
</feature>
<feature type="domain" description="EF-hand 1">
    <location>
        <begin position="446"/>
        <end position="481"/>
    </location>
</feature>
<feature type="domain" description="EF-hand 2">
    <location>
        <begin position="482"/>
        <end position="517"/>
    </location>
</feature>
<feature type="domain" description="EF-hand 3">
    <location>
        <begin position="518"/>
        <end position="557"/>
    </location>
</feature>
<feature type="domain" description="EF-hand 4">
    <location>
        <begin position="558"/>
        <end position="587"/>
    </location>
</feature>
<feature type="region of interest" description="Disordered" evidence="6">
    <location>
        <begin position="1"/>
        <end position="131"/>
    </location>
</feature>
<feature type="region of interest" description="Autoinhibitory domain" evidence="1">
    <location>
        <begin position="409"/>
        <end position="439"/>
    </location>
</feature>
<feature type="region of interest" description="Calmodulin binding (CaMBD)" evidence="1">
    <location>
        <begin position="428"/>
        <end position="448"/>
    </location>
</feature>
<feature type="compositionally biased region" description="Polar residues" evidence="6">
    <location>
        <begin position="37"/>
        <end position="58"/>
    </location>
</feature>
<feature type="compositionally biased region" description="Basic and acidic residues" evidence="6">
    <location>
        <begin position="116"/>
        <end position="131"/>
    </location>
</feature>
<feature type="active site" description="Proton acceptor" evidence="4 5">
    <location>
        <position position="271"/>
    </location>
</feature>
<feature type="binding site" evidence="4">
    <location>
        <begin position="149"/>
        <end position="157"/>
    </location>
    <ligand>
        <name>ATP</name>
        <dbReference type="ChEBI" id="CHEBI:30616"/>
    </ligand>
</feature>
<feature type="binding site" evidence="4">
    <location>
        <position position="175"/>
    </location>
    <ligand>
        <name>ATP</name>
        <dbReference type="ChEBI" id="CHEBI:30616"/>
    </ligand>
</feature>
<feature type="binding site" evidence="1">
    <location>
        <position position="462"/>
    </location>
    <ligand>
        <name>Ca(2+)</name>
        <dbReference type="ChEBI" id="CHEBI:29108"/>
        <label>1</label>
    </ligand>
</feature>
<feature type="binding site" evidence="1">
    <location>
        <position position="501"/>
    </location>
    <ligand>
        <name>Ca(2+)</name>
        <dbReference type="ChEBI" id="CHEBI:29108"/>
        <label>2</label>
    </ligand>
</feature>
<feature type="binding site" evidence="1">
    <location>
        <position position="506"/>
    </location>
    <ligand>
        <name>Ca(2+)</name>
        <dbReference type="ChEBI" id="CHEBI:29108"/>
        <label>2</label>
    </ligand>
</feature>
<feature type="binding site" evidence="1">
    <location>
        <position position="539"/>
    </location>
    <ligand>
        <name>Ca(2+)</name>
        <dbReference type="ChEBI" id="CHEBI:29108"/>
        <label>3</label>
    </ligand>
</feature>
<feature type="binding site" evidence="1">
    <location>
        <position position="546"/>
    </location>
    <ligand>
        <name>Ca(2+)</name>
        <dbReference type="ChEBI" id="CHEBI:29108"/>
        <label>3</label>
    </ligand>
</feature>
<feature type="binding site" evidence="1">
    <location>
        <position position="567"/>
    </location>
    <ligand>
        <name>Ca(2+)</name>
        <dbReference type="ChEBI" id="CHEBI:29108"/>
        <label>4</label>
    </ligand>
</feature>
<feature type="binding site" evidence="1">
    <location>
        <position position="569"/>
    </location>
    <ligand>
        <name>Ca(2+)</name>
        <dbReference type="ChEBI" id="CHEBI:29108"/>
        <label>4</label>
    </ligand>
</feature>
<feature type="binding site" evidence="1">
    <location>
        <position position="571"/>
    </location>
    <ligand>
        <name>Ca(2+)</name>
        <dbReference type="ChEBI" id="CHEBI:29108"/>
        <label>4</label>
    </ligand>
</feature>
<feature type="modified residue" description="Phosphoserine" evidence="2">
    <location>
        <position position="311"/>
    </location>
</feature>
<feature type="modified residue" description="Phosphoserine" evidence="2">
    <location>
        <position position="573"/>
    </location>
</feature>
<feature type="lipid moiety-binding region" description="N-myristoyl glycine" evidence="1">
    <location>
        <position position="2"/>
    </location>
</feature>
<feature type="sequence conflict" description="In Ref. 4; AAM91611." evidence="7" ref="4">
    <original>G</original>
    <variation>D</variation>
    <location>
        <position position="464"/>
    </location>
</feature>
<gene>
    <name type="primary">CRK4</name>
    <name type="synonym">CP4</name>
    <name type="ordered locus">At5g24430</name>
    <name type="ORF">K16H17.14</name>
</gene>
<sequence>MGHCYSRNISAVEDDEIPTGNGEVSNQPSQNHRHASIPQSPVASGTPEVNSYNISPFQSPLPAGVAPSPARTPGRKFKWPFPPPSPAKPIMAALRRRRGAPPQPRDEPIPEDSEDVVDHGGDSGGGERLDKNFGFGKNFEGKYELGKEVGRGHFGHTCWAKAKKGKMKNQTVAVKIISKAKMTSTLSIEDVRREVKLLKALSGHRHMVKFYDVYEDADNVFVVMELCEGGELLDRILARGGRYPEVDAKRILVQILSATAFFHLQGVVHRDLKPENFLFTSRNEDAILKVIDFGLSDFIRYDQRLNDVVGSAYYVAPEVLHRSYSTEADMWSIGVISYILLCGSRPFYGRTESAIFRCVLRANPNFEDMPWPSISPTAKDFVKRLLNKDHRKRMTAAQALAHPWLRDENPGLLLDFSVYKLVKSYIRASPFRRSALKALSKAIPDEELVFLKAQFMLLDPKDGGLSLNCFTMALTRYATDAMMESRLPDILNTMQPLAQKKLDFEEFCAAAVSVYQLEALEEWEQIATSAFEHFEHEGNRIISVQELAGEMSVGPSAYPLLKDWIRSSDGKLSFLGYAKFLHGVTVRSSSSRPR</sequence>
<evidence type="ECO:0000250" key="1"/>
<evidence type="ECO:0000250" key="2">
    <source>
        <dbReference type="UniProtKB" id="Q9FKW4"/>
    </source>
</evidence>
<evidence type="ECO:0000250" key="3">
    <source>
        <dbReference type="UniProtKB" id="Q9SG12"/>
    </source>
</evidence>
<evidence type="ECO:0000255" key="4">
    <source>
        <dbReference type="PROSITE-ProRule" id="PRU00159"/>
    </source>
</evidence>
<evidence type="ECO:0000255" key="5">
    <source>
        <dbReference type="PROSITE-ProRule" id="PRU10027"/>
    </source>
</evidence>
<evidence type="ECO:0000256" key="6">
    <source>
        <dbReference type="SAM" id="MobiDB-lite"/>
    </source>
</evidence>
<evidence type="ECO:0000305" key="7"/>
<evidence type="ECO:0000305" key="8">
    <source>
    </source>
</evidence>
<keyword id="KW-0067">ATP-binding</keyword>
<keyword id="KW-0106">Calcium</keyword>
<keyword id="KW-1003">Cell membrane</keyword>
<keyword id="KW-0418">Kinase</keyword>
<keyword id="KW-0449">Lipoprotein</keyword>
<keyword id="KW-0472">Membrane</keyword>
<keyword id="KW-0479">Metal-binding</keyword>
<keyword id="KW-0519">Myristate</keyword>
<keyword id="KW-0547">Nucleotide-binding</keyword>
<keyword id="KW-0597">Phosphoprotein</keyword>
<keyword id="KW-1185">Reference proteome</keyword>
<keyword id="KW-0677">Repeat</keyword>
<keyword id="KW-0723">Serine/threonine-protein kinase</keyword>
<keyword id="KW-0808">Transferase</keyword>
<proteinExistence type="evidence at protein level"/>
<organism>
    <name type="scientific">Arabidopsis thaliana</name>
    <name type="common">Mouse-ear cress</name>
    <dbReference type="NCBI Taxonomy" id="3702"/>
    <lineage>
        <taxon>Eukaryota</taxon>
        <taxon>Viridiplantae</taxon>
        <taxon>Streptophyta</taxon>
        <taxon>Embryophyta</taxon>
        <taxon>Tracheophyta</taxon>
        <taxon>Spermatophyta</taxon>
        <taxon>Magnoliopsida</taxon>
        <taxon>eudicotyledons</taxon>
        <taxon>Gunneridae</taxon>
        <taxon>Pentapetalae</taxon>
        <taxon>rosids</taxon>
        <taxon>malvids</taxon>
        <taxon>Brassicales</taxon>
        <taxon>Brassicaceae</taxon>
        <taxon>Camelineae</taxon>
        <taxon>Arabidopsis</taxon>
    </lineage>
</organism>
<comment type="function">
    <text evidence="1">May play a role in signal transduction pathways that involve calcium as a second messenger.</text>
</comment>
<comment type="catalytic activity">
    <reaction>
        <text>L-seryl-[protein] + ATP = O-phospho-L-seryl-[protein] + ADP + H(+)</text>
        <dbReference type="Rhea" id="RHEA:17989"/>
        <dbReference type="Rhea" id="RHEA-COMP:9863"/>
        <dbReference type="Rhea" id="RHEA-COMP:11604"/>
        <dbReference type="ChEBI" id="CHEBI:15378"/>
        <dbReference type="ChEBI" id="CHEBI:29999"/>
        <dbReference type="ChEBI" id="CHEBI:30616"/>
        <dbReference type="ChEBI" id="CHEBI:83421"/>
        <dbReference type="ChEBI" id="CHEBI:456216"/>
        <dbReference type="EC" id="2.7.11.1"/>
    </reaction>
</comment>
<comment type="catalytic activity">
    <reaction>
        <text>L-threonyl-[protein] + ATP = O-phospho-L-threonyl-[protein] + ADP + H(+)</text>
        <dbReference type="Rhea" id="RHEA:46608"/>
        <dbReference type="Rhea" id="RHEA-COMP:11060"/>
        <dbReference type="Rhea" id="RHEA-COMP:11605"/>
        <dbReference type="ChEBI" id="CHEBI:15378"/>
        <dbReference type="ChEBI" id="CHEBI:30013"/>
        <dbReference type="ChEBI" id="CHEBI:30616"/>
        <dbReference type="ChEBI" id="CHEBI:61977"/>
        <dbReference type="ChEBI" id="CHEBI:456216"/>
        <dbReference type="EC" id="2.7.11.1"/>
    </reaction>
</comment>
<comment type="activity regulation">
    <text evidence="1">Activated by calcium and calmodulin. Autophosphorylation may play an important role in the regulation of the kinase activity (By similarity).</text>
</comment>
<comment type="subunit">
    <text evidence="1">Binds calmodulin (CaM) in a calcium-dependent manner.</text>
</comment>
<comment type="subcellular location">
    <subcellularLocation>
        <location evidence="8">Cell membrane</location>
        <topology evidence="1">Lipid-anchor</topology>
        <orientation evidence="1">Cytoplasmic side</orientation>
    </subcellularLocation>
</comment>
<comment type="domain">
    <text evidence="1">There are 3 contiguous domains conserved in the CDPK subfamily: a kinase domain, an autoinhibitory (junction) domain and a calmodulin-like domain. The autoinhibitory domain (409-439) inactivates kinase activity under calcium-free conditions (By similarity).</text>
</comment>
<comment type="PTM">
    <text evidence="1">Autophosphorylated.</text>
</comment>
<comment type="similarity">
    <text evidence="4">Belongs to the protein kinase superfamily. Ser/Thr protein kinase family. CDPK subfamily.</text>
</comment>
<comment type="sequence caution" evidence="7">
    <conflict type="miscellaneous discrepancy">
        <sequence resource="EMBL-CDS" id="AAD28759"/>
    </conflict>
    <text>Several sequencing errors.</text>
</comment>
<comment type="sequence caution" evidence="7">
    <conflict type="erroneous initiation">
        <sequence resource="EMBL-CDS" id="AAM91611"/>
    </conflict>
    <text>Truncated N-terminus.</text>
</comment>
<comment type="sequence caution" evidence="7">
    <conflict type="erroneous initiation">
        <sequence resource="EMBL-CDS" id="BAD94474"/>
    </conflict>
    <text>Truncated N-terminus.</text>
</comment>
<accession>Q9FIM9</accession>
<accession>Q56WR9</accession>
<accession>Q8L7K3</accession>
<accession>Q9XF48</accession>